<reference key="1">
    <citation type="journal article" date="1994" name="Mech. Dev.">
        <title>Xenopus cadherins: the maternal pool comprises distinguishable members of the family.</title>
        <authorList>
            <person name="Mueller H.-A.J."/>
            <person name="Kuehl M."/>
            <person name="Finnemann S."/>
            <person name="Schneider S."/>
            <person name="van der Poel S.Z."/>
            <person name="Hausen P."/>
            <person name="Wedlich D."/>
        </authorList>
    </citation>
    <scope>NUCLEOTIDE SEQUENCE [MRNA]</scope>
</reference>
<reference key="2">
    <citation type="journal article" date="1991" name="Mech. Dev.">
        <title>Expression of XBcad, a novel cadherin, during oogenesis and early development of Xenopus.</title>
        <authorList>
            <person name="Herzberg F."/>
            <person name="Wildermuth V."/>
            <person name="Wedlich D."/>
        </authorList>
    </citation>
    <scope>NUCLEOTIDE SEQUENCE [MRNA] OF 438-884</scope>
</reference>
<proteinExistence type="evidence at transcript level"/>
<accession>P33152</accession>
<sequence length="884" mass="97980">MGGTDKFRYPSVWLCGLLCLLQVVPSINVDVSGCQPGFSSANYTFSVNRRELERGRKLGKVNLVDCTTRKHGLYDVGDSRFRVLPDGTVLVKRHVKLHSKDTRFTISTWDARGIKHSTNISVVNKRHRSGEEARSRSSELPVLTFPEKHTGLKRKKRDWVIPPIKVSENERGPFPKRLVQIKSNKEKLSKVFYSITGQGADTPPEGIFRIEKETGWMQVTRPLDREEYEKYVLLSHAVSENGASVEEPMEITVTVIDQNDNRPKFTQPVFRGSVREGVQPGTKVMSVSATDDDDSIDSLNGVIAYSILKQDPEEPIPNLFTINRETGVISLIGTGLDREKFPEYTLTVQAADLDGAGLTAEGKAVIEITDANDNAPIFDPKTYTALVPENEVGFEVQRLSVTDLDMPGTAAWQAVYKIRVNEGGFFNITTDPESNQGILTTAKGLDFEVRKQYVIQITVENAVPFSVPLPTSTATVTVTVEDVNEAPVFVPVVSRVDVSEDLTRGEKIVSLVAQDPDKQQIQKLSYFIGNDPARWLTINKDNGIVTGNGNLDRESEYVKNNTYTVIMLVTDDGVPVGTGTGTLILHVLDINDNGPVPSPRVFTMCDQNPEPQVLTITDADIPPNTYPYSVSLSHGSELTWKAELDSKGTSMRLSPTQQLKKGDYSIYVLLADAQANRQLTVVNATVCICEGKAIKCQEKLVAGFDLPIILVILGSILALLILSLLLLLFLKRKKVVKEPLLLPEDDTRDNIFYYGEEGGGEEDQDYDLSQLHRGLDARPDIMRNDVVPTLMSVPHYRPRPSNPDEIGNFIDENLDAADNDPTAPPYDSLLVFDYEGSGSEAASLSSLNSSNSNNEHDYNYLNDWGPRFRKLADMYGGDDDDDEE</sequence>
<keyword id="KW-0106">Calcium</keyword>
<keyword id="KW-0130">Cell adhesion</keyword>
<keyword id="KW-1003">Cell membrane</keyword>
<keyword id="KW-0165">Cleavage on pair of basic residues</keyword>
<keyword id="KW-0325">Glycoprotein</keyword>
<keyword id="KW-0472">Membrane</keyword>
<keyword id="KW-0479">Metal-binding</keyword>
<keyword id="KW-1185">Reference proteome</keyword>
<keyword id="KW-0677">Repeat</keyword>
<keyword id="KW-0732">Signal</keyword>
<keyword id="KW-0812">Transmembrane</keyword>
<keyword id="KW-1133">Transmembrane helix</keyword>
<name>CADHB_XENLA</name>
<organism>
    <name type="scientific">Xenopus laevis</name>
    <name type="common">African clawed frog</name>
    <dbReference type="NCBI Taxonomy" id="8355"/>
    <lineage>
        <taxon>Eukaryota</taxon>
        <taxon>Metazoa</taxon>
        <taxon>Chordata</taxon>
        <taxon>Craniata</taxon>
        <taxon>Vertebrata</taxon>
        <taxon>Euteleostomi</taxon>
        <taxon>Amphibia</taxon>
        <taxon>Batrachia</taxon>
        <taxon>Anura</taxon>
        <taxon>Pipoidea</taxon>
        <taxon>Pipidae</taxon>
        <taxon>Xenopodinae</taxon>
        <taxon>Xenopus</taxon>
        <taxon>Xenopus</taxon>
    </lineage>
</organism>
<evidence type="ECO:0000250" key="1"/>
<evidence type="ECO:0000255" key="2"/>
<evidence type="ECO:0000255" key="3">
    <source>
        <dbReference type="PROSITE-ProRule" id="PRU00043"/>
    </source>
</evidence>
<evidence type="ECO:0000305" key="4"/>
<feature type="signal peptide" evidence="2">
    <location>
        <begin position="1"/>
        <end position="26"/>
    </location>
</feature>
<feature type="propeptide" id="PRO_0000003727" evidence="2">
    <location>
        <begin position="27"/>
        <end position="157"/>
    </location>
</feature>
<feature type="chain" id="PRO_0000003728" description="Blastomere cadherin">
    <location>
        <begin position="158"/>
        <end position="884"/>
    </location>
</feature>
<feature type="topological domain" description="Extracellular" evidence="2">
    <location>
        <begin position="158"/>
        <end position="706"/>
    </location>
</feature>
<feature type="transmembrane region" description="Helical" evidence="2">
    <location>
        <begin position="707"/>
        <end position="730"/>
    </location>
</feature>
<feature type="topological domain" description="Cytoplasmic" evidence="2">
    <location>
        <begin position="731"/>
        <end position="884"/>
    </location>
</feature>
<feature type="domain" description="Cadherin 1" evidence="3">
    <location>
        <begin position="158"/>
        <end position="265"/>
    </location>
</feature>
<feature type="domain" description="Cadherin 2" evidence="3">
    <location>
        <begin position="266"/>
        <end position="378"/>
    </location>
</feature>
<feature type="domain" description="Cadherin 3" evidence="3">
    <location>
        <begin position="379"/>
        <end position="489"/>
    </location>
</feature>
<feature type="domain" description="Cadherin 4" evidence="3">
    <location>
        <begin position="490"/>
        <end position="595"/>
    </location>
</feature>
<feature type="domain" description="Cadherin 5" evidence="3">
    <location>
        <begin position="596"/>
        <end position="706"/>
    </location>
</feature>
<feature type="glycosylation site" description="N-linked (GlcNAc...) asparagine" evidence="2">
    <location>
        <position position="427"/>
    </location>
</feature>
<feature type="glycosylation site" description="N-linked (GlcNAc...) asparagine" evidence="2">
    <location>
        <position position="560"/>
    </location>
</feature>
<feature type="glycosylation site" description="N-linked (GlcNAc...) asparagine" evidence="2">
    <location>
        <position position="683"/>
    </location>
</feature>
<feature type="sequence conflict" description="In Ref. 2; CAA45251." evidence="4" ref="2">
    <original>ILT</original>
    <variation>NSA</variation>
    <location>
        <begin position="438"/>
        <end position="440"/>
    </location>
</feature>
<feature type="sequence conflict" description="In Ref. 2; CAA45251." evidence="4" ref="2">
    <original>R</original>
    <variation>Q</variation>
    <location>
        <position position="677"/>
    </location>
</feature>
<feature type="sequence conflict" description="In Ref. 2; CAA45251." evidence="4" ref="2">
    <original>V</original>
    <variation>A</variation>
    <location>
        <position position="787"/>
    </location>
</feature>
<feature type="sequence conflict" description="In Ref. 2; CAA45251." evidence="4" ref="2">
    <original>D</original>
    <variation>N</variation>
    <location>
        <position position="820"/>
    </location>
</feature>
<feature type="sequence conflict" description="In Ref. 2; CAA45251." evidence="4" ref="2">
    <original>D</original>
    <variation>N</variation>
    <location>
        <position position="857"/>
    </location>
</feature>
<feature type="sequence conflict" description="In Ref. 2; CAA45251." evidence="4" ref="2">
    <original>D</original>
    <variation>N</variation>
    <location>
        <position position="863"/>
    </location>
</feature>
<feature type="sequence conflict" description="In Ref. 2; CAA45251." evidence="4" ref="2">
    <location>
        <position position="882"/>
    </location>
</feature>
<comment type="function">
    <text>Cadherins are calcium-dependent cell adhesion proteins. They preferentially interact with themselves in a homophilic manner in connecting cells; cadherins may thus contribute to the sorting of heterogeneous cell types.</text>
</comment>
<comment type="subcellular location">
    <subcellularLocation>
        <location>Cell membrane</location>
        <topology>Single-pass type I membrane protein</topology>
    </subcellularLocation>
</comment>
<comment type="tissue specificity">
    <text>Expressed in pituitary gland, lung and kidney.</text>
</comment>
<comment type="developmental stage">
    <text>During oogenesis and early development.</text>
</comment>
<comment type="domain">
    <text evidence="1">Three calcium ions are usually bound at the interface of each cadherin domain and rigidify the connections, imparting a strong curvature to the full-length ectodomain.</text>
</comment>
<comment type="sequence caution" evidence="4">
    <conflict type="erroneous initiation">
        <sequence resource="EMBL-CDS" id="CAA55292"/>
    </conflict>
    <text>Extended N-terminus.</text>
</comment>
<dbReference type="EMBL" id="X78546">
    <property type="protein sequence ID" value="CAA55292.1"/>
    <property type="status" value="ALT_INIT"/>
    <property type="molecule type" value="mRNA"/>
</dbReference>
<dbReference type="EMBL" id="X63719">
    <property type="protein sequence ID" value="CAA45251.1"/>
    <property type="molecule type" value="mRNA"/>
</dbReference>
<dbReference type="PIR" id="S43064">
    <property type="entry name" value="S43064"/>
</dbReference>
<dbReference type="RefSeq" id="NP_001089045.1">
    <property type="nucleotide sequence ID" value="NM_001095576.1"/>
</dbReference>
<dbReference type="SMR" id="P33152"/>
<dbReference type="BioGRID" id="534745">
    <property type="interactions" value="1"/>
</dbReference>
<dbReference type="DNASU" id="594865"/>
<dbReference type="AGR" id="Xenbase:XB-GENE-864850"/>
<dbReference type="Xenbase" id="XB-GENE-864850">
    <property type="gene designation" value="cdh3.L"/>
</dbReference>
<dbReference type="Proteomes" id="UP000186698">
    <property type="component" value="Unplaced"/>
</dbReference>
<dbReference type="Bgee" id="594865">
    <property type="expression patterns" value="Expressed in gastrula and 16 other cell types or tissues"/>
</dbReference>
<dbReference type="GO" id="GO:0005912">
    <property type="term" value="C:adherens junction"/>
    <property type="evidence" value="ECO:0000318"/>
    <property type="project" value="GO_Central"/>
</dbReference>
<dbReference type="GO" id="GO:0016342">
    <property type="term" value="C:catenin complex"/>
    <property type="evidence" value="ECO:0000318"/>
    <property type="project" value="GO_Central"/>
</dbReference>
<dbReference type="GO" id="GO:0005737">
    <property type="term" value="C:cytoplasm"/>
    <property type="evidence" value="ECO:0000318"/>
    <property type="project" value="GO_Central"/>
</dbReference>
<dbReference type="GO" id="GO:0008013">
    <property type="term" value="F:beta-catenin binding"/>
    <property type="evidence" value="ECO:0000318"/>
    <property type="project" value="GO_Central"/>
</dbReference>
<dbReference type="GO" id="GO:0045296">
    <property type="term" value="F:cadherin binding"/>
    <property type="evidence" value="ECO:0000318"/>
    <property type="project" value="GO_Central"/>
</dbReference>
<dbReference type="GO" id="GO:0005509">
    <property type="term" value="F:calcium ion binding"/>
    <property type="evidence" value="ECO:0007669"/>
    <property type="project" value="InterPro"/>
</dbReference>
<dbReference type="GO" id="GO:0034332">
    <property type="term" value="P:adherens junction organization"/>
    <property type="evidence" value="ECO:0000318"/>
    <property type="project" value="GO_Central"/>
</dbReference>
<dbReference type="GO" id="GO:0016339">
    <property type="term" value="P:calcium-dependent cell-cell adhesion via plasma membrane cell adhesion molecules"/>
    <property type="evidence" value="ECO:0000318"/>
    <property type="project" value="GO_Central"/>
</dbReference>
<dbReference type="GO" id="GO:0016477">
    <property type="term" value="P:cell migration"/>
    <property type="evidence" value="ECO:0000318"/>
    <property type="project" value="GO_Central"/>
</dbReference>
<dbReference type="GO" id="GO:0000902">
    <property type="term" value="P:cell morphogenesis"/>
    <property type="evidence" value="ECO:0000318"/>
    <property type="project" value="GO_Central"/>
</dbReference>
<dbReference type="GO" id="GO:0044331">
    <property type="term" value="P:cell-cell adhesion mediated by cadherin"/>
    <property type="evidence" value="ECO:0000318"/>
    <property type="project" value="GO_Central"/>
</dbReference>
<dbReference type="GO" id="GO:0007043">
    <property type="term" value="P:cell-cell junction assembly"/>
    <property type="evidence" value="ECO:0000318"/>
    <property type="project" value="GO_Central"/>
</dbReference>
<dbReference type="GO" id="GO:0007156">
    <property type="term" value="P:homophilic cell adhesion via plasma membrane adhesion molecules"/>
    <property type="evidence" value="ECO:0007669"/>
    <property type="project" value="InterPro"/>
</dbReference>
<dbReference type="CDD" id="cd11304">
    <property type="entry name" value="Cadherin_repeat"/>
    <property type="match status" value="3"/>
</dbReference>
<dbReference type="FunFam" id="2.60.40.60:FF:000011">
    <property type="entry name" value="Cadherin 1"/>
    <property type="match status" value="1"/>
</dbReference>
<dbReference type="FunFam" id="2.60.40.60:FF:000191">
    <property type="entry name" value="Cadherin 1"/>
    <property type="match status" value="1"/>
</dbReference>
<dbReference type="FunFam" id="2.60.40.60:FF:000019">
    <property type="entry name" value="Cadherin 2"/>
    <property type="match status" value="1"/>
</dbReference>
<dbReference type="FunFam" id="2.60.40.60:FF:000022">
    <property type="entry name" value="Cadherin 2"/>
    <property type="match status" value="1"/>
</dbReference>
<dbReference type="FunFam" id="2.60.40.60:FF:000027">
    <property type="entry name" value="Cadherin 2"/>
    <property type="match status" value="1"/>
</dbReference>
<dbReference type="FunFam" id="4.10.900.10:FF:000001">
    <property type="entry name" value="Cadherin 2"/>
    <property type="match status" value="1"/>
</dbReference>
<dbReference type="FunFam" id="2.60.40.60:FF:000031">
    <property type="entry name" value="Cadherin 3"/>
    <property type="match status" value="1"/>
</dbReference>
<dbReference type="Gene3D" id="2.60.40.60">
    <property type="entry name" value="Cadherins"/>
    <property type="match status" value="6"/>
</dbReference>
<dbReference type="Gene3D" id="4.10.900.10">
    <property type="entry name" value="TCF3-CBD (Catenin binding domain)"/>
    <property type="match status" value="1"/>
</dbReference>
<dbReference type="InterPro" id="IPR039808">
    <property type="entry name" value="Cadherin"/>
</dbReference>
<dbReference type="InterPro" id="IPR002126">
    <property type="entry name" value="Cadherin-like_dom"/>
</dbReference>
<dbReference type="InterPro" id="IPR015919">
    <property type="entry name" value="Cadherin-like_sf"/>
</dbReference>
<dbReference type="InterPro" id="IPR020894">
    <property type="entry name" value="Cadherin_CS"/>
</dbReference>
<dbReference type="InterPro" id="IPR014868">
    <property type="entry name" value="Cadherin_pro_dom"/>
</dbReference>
<dbReference type="InterPro" id="IPR000233">
    <property type="entry name" value="Cadherin_Y-type_LIR"/>
</dbReference>
<dbReference type="InterPro" id="IPR027397">
    <property type="entry name" value="Catenin-bd_sf"/>
</dbReference>
<dbReference type="PANTHER" id="PTHR24027:SF444">
    <property type="entry name" value="BLASTOMERE CADHERIN"/>
    <property type="match status" value="1"/>
</dbReference>
<dbReference type="PANTHER" id="PTHR24027">
    <property type="entry name" value="CADHERIN-23"/>
    <property type="match status" value="1"/>
</dbReference>
<dbReference type="Pfam" id="PF01049">
    <property type="entry name" value="CADH_Y-type_LIR"/>
    <property type="match status" value="1"/>
</dbReference>
<dbReference type="Pfam" id="PF00028">
    <property type="entry name" value="Cadherin"/>
    <property type="match status" value="4"/>
</dbReference>
<dbReference type="Pfam" id="PF08758">
    <property type="entry name" value="Cadherin_pro"/>
    <property type="match status" value="1"/>
</dbReference>
<dbReference type="PRINTS" id="PR00205">
    <property type="entry name" value="CADHERIN"/>
</dbReference>
<dbReference type="SMART" id="SM00112">
    <property type="entry name" value="CA"/>
    <property type="match status" value="4"/>
</dbReference>
<dbReference type="SMART" id="SM01055">
    <property type="entry name" value="Cadherin_pro"/>
    <property type="match status" value="1"/>
</dbReference>
<dbReference type="SUPFAM" id="SSF49313">
    <property type="entry name" value="Cadherin-like"/>
    <property type="match status" value="6"/>
</dbReference>
<dbReference type="PROSITE" id="PS00232">
    <property type="entry name" value="CADHERIN_1"/>
    <property type="match status" value="3"/>
</dbReference>
<dbReference type="PROSITE" id="PS50268">
    <property type="entry name" value="CADHERIN_2"/>
    <property type="match status" value="4"/>
</dbReference>
<protein>
    <recommendedName>
        <fullName>Blastomere cadherin</fullName>
        <shortName>B-cadherin</shortName>
    </recommendedName>
    <alternativeName>
        <fullName>XBcad</fullName>
    </alternativeName>
</protein>